<sequence length="508" mass="56150">MGLPWYRVHTVVLNDPGRLLSVHIMHTALVSGWAGSMVLYELAVFDPSDPVLDPMWRQGMFVIPFMTRLGITNSWGGWSITGGTITNPGIWSYEGVAGAHIMLSGLCFLAAIWHWVYWDLEIFRDERTGKPSLDLPKIFGIHLFLAGVACFGFGAFHVTGLYGPGIWVSDPYGLTGKVQPVNPSWGAEGFDPFVPGGIASHHIAAGTLGILAGLFHLSVRPPQRLYKGLRMGNIETVLSSSIAAVFFAAFVVAGTMWYGSATTPIELFGPTRYQWDQGYFQQEIYRRVSAGLAENLSLSEAWSKIPEKLAFYDYIGNNPAKGGLFRAGSMDNGDGIAVGWLGHPVFRDKEGHELFVRRMPTFFETFPVVLVDGDGIVRADVPFRRAESKYSVEQVGVTVEFYGGELNGVSYSDPATVKKYARRAQLGEIFELDRATLKSDGVFRSSPRGWFTFGHASFALLFFFGHIWHGARTLFRDVFAGIDPDLDSQVEFGTFQKIGDPTTRRQAV</sequence>
<dbReference type="EMBL" id="DQ887677">
    <property type="protein sequence ID" value="ABI14497.1"/>
    <property type="molecule type" value="Genomic_DNA"/>
</dbReference>
<dbReference type="RefSeq" id="YP_784499.1">
    <property type="nucleotide sequence ID" value="NC_008457.1"/>
</dbReference>
<dbReference type="SMR" id="Q06GN4"/>
<dbReference type="GeneID" id="4363762"/>
<dbReference type="GO" id="GO:0009535">
    <property type="term" value="C:chloroplast thylakoid membrane"/>
    <property type="evidence" value="ECO:0007669"/>
    <property type="project" value="UniProtKB-SubCell"/>
</dbReference>
<dbReference type="GO" id="GO:0009523">
    <property type="term" value="C:photosystem II"/>
    <property type="evidence" value="ECO:0007669"/>
    <property type="project" value="UniProtKB-KW"/>
</dbReference>
<dbReference type="GO" id="GO:0016168">
    <property type="term" value="F:chlorophyll binding"/>
    <property type="evidence" value="ECO:0007669"/>
    <property type="project" value="UniProtKB-UniRule"/>
</dbReference>
<dbReference type="GO" id="GO:0045156">
    <property type="term" value="F:electron transporter, transferring electrons within the cyclic electron transport pathway of photosynthesis activity"/>
    <property type="evidence" value="ECO:0007669"/>
    <property type="project" value="InterPro"/>
</dbReference>
<dbReference type="GO" id="GO:0009772">
    <property type="term" value="P:photosynthetic electron transport in photosystem II"/>
    <property type="evidence" value="ECO:0007669"/>
    <property type="project" value="InterPro"/>
</dbReference>
<dbReference type="FunFam" id="3.10.680.10:FF:000001">
    <property type="entry name" value="Photosystem II CP47 reaction center protein"/>
    <property type="match status" value="1"/>
</dbReference>
<dbReference type="Gene3D" id="3.10.680.10">
    <property type="entry name" value="Photosystem II CP47 reaction center protein"/>
    <property type="match status" value="1"/>
</dbReference>
<dbReference type="HAMAP" id="MF_01495">
    <property type="entry name" value="PSII_PsbB_CP47"/>
    <property type="match status" value="1"/>
</dbReference>
<dbReference type="InterPro" id="IPR000932">
    <property type="entry name" value="PS_antenna-like"/>
</dbReference>
<dbReference type="InterPro" id="IPR036001">
    <property type="entry name" value="PS_II_antenna-like_sf"/>
</dbReference>
<dbReference type="InterPro" id="IPR017486">
    <property type="entry name" value="PSII_PsbB"/>
</dbReference>
<dbReference type="NCBIfam" id="TIGR03039">
    <property type="entry name" value="PS_II_CP47"/>
    <property type="match status" value="1"/>
</dbReference>
<dbReference type="PANTHER" id="PTHR33180">
    <property type="entry name" value="PHOTOSYSTEM II CP43 REACTION CENTER PROTEIN"/>
    <property type="match status" value="1"/>
</dbReference>
<dbReference type="PANTHER" id="PTHR33180:SF37">
    <property type="entry name" value="PHOTOSYSTEM II CP43 REACTION CENTER PROTEIN"/>
    <property type="match status" value="1"/>
</dbReference>
<dbReference type="Pfam" id="PF00421">
    <property type="entry name" value="PSII"/>
    <property type="match status" value="1"/>
</dbReference>
<dbReference type="SUPFAM" id="SSF161077">
    <property type="entry name" value="Photosystem II antenna protein-like"/>
    <property type="match status" value="1"/>
</dbReference>
<reference key="1">
    <citation type="journal article" date="2006" name="BMC Evol. Biol.">
        <title>Complete plastid genome sequences of Drimys, Liriodendron, and Piper: implications for the phylogenetic relationships of magnoliids.</title>
        <authorList>
            <person name="Cai Z."/>
            <person name="Penaflor C."/>
            <person name="Kuehl J.V."/>
            <person name="Leebens-Mack J."/>
            <person name="Carlson J.E."/>
            <person name="dePamphilis C.W."/>
            <person name="Boore J.L."/>
            <person name="Jansen R.K."/>
        </authorList>
    </citation>
    <scope>NUCLEOTIDE SEQUENCE [LARGE SCALE GENOMIC DNA]</scope>
</reference>
<geneLocation type="chloroplast"/>
<evidence type="ECO:0000255" key="1">
    <source>
        <dbReference type="HAMAP-Rule" id="MF_01495"/>
    </source>
</evidence>
<gene>
    <name evidence="1" type="primary">psbB</name>
</gene>
<name>PSBB_PIPCE</name>
<comment type="function">
    <text evidence="1">One of the components of the core complex of photosystem II (PSII). It binds chlorophyll and helps catalyze the primary light-induced photochemical processes of PSII. PSII is a light-driven water:plastoquinone oxidoreductase, using light energy to abstract electrons from H(2)O, generating O(2) and a proton gradient subsequently used for ATP formation.</text>
</comment>
<comment type="cofactor">
    <text evidence="1">Binds multiple chlorophylls. PSII binds additional chlorophylls, carotenoids and specific lipids.</text>
</comment>
<comment type="subunit">
    <text evidence="1">PSII is composed of 1 copy each of membrane proteins PsbA, PsbB, PsbC, PsbD, PsbE, PsbF, PsbH, PsbI, PsbJ, PsbK, PsbL, PsbM, PsbT, PsbX, PsbY, PsbZ, Psb30/Ycf12, at least 3 peripheral proteins of the oxygen-evolving complex and a large number of cofactors. It forms dimeric complexes.</text>
</comment>
<comment type="subcellular location">
    <subcellularLocation>
        <location evidence="1">Plastid</location>
        <location evidence="1">Chloroplast thylakoid membrane</location>
        <topology evidence="1">Multi-pass membrane protein</topology>
    </subcellularLocation>
</comment>
<comment type="similarity">
    <text evidence="1">Belongs to the PsbB/PsbC family. PsbB subfamily.</text>
</comment>
<organism>
    <name type="scientific">Piper cenocladum</name>
    <name type="common">Ant piper</name>
    <dbReference type="NCBI Taxonomy" id="398741"/>
    <lineage>
        <taxon>Eukaryota</taxon>
        <taxon>Viridiplantae</taxon>
        <taxon>Streptophyta</taxon>
        <taxon>Embryophyta</taxon>
        <taxon>Tracheophyta</taxon>
        <taxon>Spermatophyta</taxon>
        <taxon>Magnoliopsida</taxon>
        <taxon>Magnoliidae</taxon>
        <taxon>Piperales</taxon>
        <taxon>Piperaceae</taxon>
        <taxon>Piper</taxon>
    </lineage>
</organism>
<protein>
    <recommendedName>
        <fullName evidence="1">Photosystem II CP47 reaction center protein</fullName>
    </recommendedName>
    <alternativeName>
        <fullName evidence="1">PSII 47 kDa protein</fullName>
    </alternativeName>
    <alternativeName>
        <fullName evidence="1">Protein CP-47</fullName>
    </alternativeName>
</protein>
<feature type="chain" id="PRO_0000359856" description="Photosystem II CP47 reaction center protein">
    <location>
        <begin position="1"/>
        <end position="508"/>
    </location>
</feature>
<feature type="transmembrane region" description="Helical" evidence="1">
    <location>
        <begin position="21"/>
        <end position="36"/>
    </location>
</feature>
<feature type="transmembrane region" description="Helical" evidence="1">
    <location>
        <begin position="101"/>
        <end position="115"/>
    </location>
</feature>
<feature type="transmembrane region" description="Helical" evidence="1">
    <location>
        <begin position="140"/>
        <end position="156"/>
    </location>
</feature>
<feature type="transmembrane region" description="Helical" evidence="1">
    <location>
        <begin position="203"/>
        <end position="218"/>
    </location>
</feature>
<feature type="transmembrane region" description="Helical" evidence="1">
    <location>
        <begin position="237"/>
        <end position="252"/>
    </location>
</feature>
<feature type="transmembrane region" description="Helical" evidence="1">
    <location>
        <begin position="457"/>
        <end position="472"/>
    </location>
</feature>
<accession>Q06GN4</accession>
<keyword id="KW-0148">Chlorophyll</keyword>
<keyword id="KW-0150">Chloroplast</keyword>
<keyword id="KW-0157">Chromophore</keyword>
<keyword id="KW-0472">Membrane</keyword>
<keyword id="KW-0602">Photosynthesis</keyword>
<keyword id="KW-0604">Photosystem II</keyword>
<keyword id="KW-0934">Plastid</keyword>
<keyword id="KW-0793">Thylakoid</keyword>
<keyword id="KW-0812">Transmembrane</keyword>
<keyword id="KW-1133">Transmembrane helix</keyword>
<proteinExistence type="inferred from homology"/>